<keyword id="KW-0963">Cytoplasm</keyword>
<keyword id="KW-1185">Reference proteome</keyword>
<comment type="function">
    <text evidence="1">May be involved in a process influencing telomere capping.</text>
</comment>
<comment type="subcellular location">
    <subcellularLocation>
        <location evidence="1">Cytoplasm</location>
    </subcellularLocation>
</comment>
<comment type="similarity">
    <text evidence="4">Belongs to the RTC5 family.</text>
</comment>
<protein>
    <recommendedName>
        <fullName>Restriction of telomere capping protein 5</fullName>
    </recommendedName>
</protein>
<accession>C6H208</accession>
<feature type="chain" id="PRO_0000408805" description="Restriction of telomere capping protein 5">
    <location>
        <begin position="1"/>
        <end position="682"/>
    </location>
</feature>
<feature type="domain" description="TLDc" evidence="2">
    <location>
        <begin position="369"/>
        <end position="605"/>
    </location>
</feature>
<feature type="region of interest" description="Disordered" evidence="3">
    <location>
        <begin position="166"/>
        <end position="200"/>
    </location>
</feature>
<feature type="region of interest" description="Disordered" evidence="3">
    <location>
        <begin position="331"/>
        <end position="357"/>
    </location>
</feature>
<feature type="compositionally biased region" description="Polar residues" evidence="3">
    <location>
        <begin position="176"/>
        <end position="185"/>
    </location>
</feature>
<feature type="compositionally biased region" description="Pro residues" evidence="3">
    <location>
        <begin position="344"/>
        <end position="357"/>
    </location>
</feature>
<evidence type="ECO:0000250" key="1"/>
<evidence type="ECO:0000255" key="2">
    <source>
        <dbReference type="PROSITE-ProRule" id="PRU01234"/>
    </source>
</evidence>
<evidence type="ECO:0000256" key="3">
    <source>
        <dbReference type="SAM" id="MobiDB-lite"/>
    </source>
</evidence>
<evidence type="ECO:0000305" key="4"/>
<proteinExistence type="inferred from homology"/>
<sequence length="682" mass="73762">MGGALSTDGAEQRASSVEELNQRLAHRFAAKCFEPLELTHLKENFFSRALDQHGIRYWNEEILSEFLGIPDGAGSAAAATSDGSLDAGPVIFRMVSYLGAFPFQNTMAPTVLTFESMVKVVVLLTERYGKVLKRGKKDRMKLLFGSLADVGRRDIITVLKEATEDSLESIGPSDPRSASPSTHNTGFLVDQPVNDEDEEDDDDLAIAALESLDAIEVFKHDQRIDKTVYESKISLTTFRRLLTLLLVTAPLRPLGRVSKFTTGLSKPSLDAVHEQVDSILAALDPGEASDGIGYKSFSKLVSTSLPYLFDPLTPLFEHLLFSKNLDLSRKRDSQTTNGLTSKPVPTPPSTPPLSPPLSPVISTGGFDSCILNPALLSHLSFFVSTNVHIPNIFRNRTHLHPVFSSTEHGESLTSFSHHVMTWQAPSILLVRGAVVSESSEEQLTTIGAYLPQPWKQTSSYSSRRSSEAPDPSTLPCLFELSPVHTVLQGSPSFSSLKSNMPVTHFSTKTGIAIGCMIPPSSRKSFGSDLHPKPAGGGSLLIDSALENATFIVSNGLNGPGVFLPPGISPVLSSTSLTASVPSMSSSNQNFTKSISIYNLEVWGIIPSTSLATQLDGSGSPIEKRDAISLQRAQWDFEAREAERRQAINMKVGGGESDAQTGRALLEMAGIIGDSYYSGHHRH</sequence>
<reference key="1">
    <citation type="submission" date="2009-05" db="EMBL/GenBank/DDBJ databases">
        <title>The genome sequence of Ajellomyces capsulatus strain H143.</title>
        <authorList>
            <person name="Champion M."/>
            <person name="Cuomo C.A."/>
            <person name="Ma L.-J."/>
            <person name="Henn M.R."/>
            <person name="Sil A."/>
            <person name="Goldman B."/>
            <person name="Young S.K."/>
            <person name="Kodira C.D."/>
            <person name="Zeng Q."/>
            <person name="Koehrsen M."/>
            <person name="Alvarado L."/>
            <person name="Berlin A.M."/>
            <person name="Borenstein D."/>
            <person name="Chen Z."/>
            <person name="Engels R."/>
            <person name="Freedman E."/>
            <person name="Gellesch M."/>
            <person name="Goldberg J."/>
            <person name="Griggs A."/>
            <person name="Gujja S."/>
            <person name="Heiman D.I."/>
            <person name="Hepburn T.A."/>
            <person name="Howarth C."/>
            <person name="Jen D."/>
            <person name="Larson L."/>
            <person name="Lewis B."/>
            <person name="Mehta T."/>
            <person name="Park D."/>
            <person name="Pearson M."/>
            <person name="Roberts A."/>
            <person name="Saif S."/>
            <person name="Shea T.D."/>
            <person name="Shenoy N."/>
            <person name="Sisk P."/>
            <person name="Stolte C."/>
            <person name="Sykes S."/>
            <person name="Walk T."/>
            <person name="White J."/>
            <person name="Yandava C."/>
            <person name="Klein B."/>
            <person name="McEwen J.G."/>
            <person name="Puccia R."/>
            <person name="Goldman G.H."/>
            <person name="Felipe M.S."/>
            <person name="Nino-Vega G."/>
            <person name="San-Blas G."/>
            <person name="Taylor J.W."/>
            <person name="Mendoza L."/>
            <person name="Galagan J.E."/>
            <person name="Nusbaum C."/>
            <person name="Birren B.W."/>
        </authorList>
    </citation>
    <scope>NUCLEOTIDE SEQUENCE [LARGE SCALE GENOMIC DNA]</scope>
    <source>
        <strain>H143</strain>
    </source>
</reference>
<name>RTC5_AJECH</name>
<organism>
    <name type="scientific">Ajellomyces capsulatus (strain H143)</name>
    <name type="common">Darling's disease fungus</name>
    <name type="synonym">Histoplasma capsulatum</name>
    <dbReference type="NCBI Taxonomy" id="544712"/>
    <lineage>
        <taxon>Eukaryota</taxon>
        <taxon>Fungi</taxon>
        <taxon>Dikarya</taxon>
        <taxon>Ascomycota</taxon>
        <taxon>Pezizomycotina</taxon>
        <taxon>Eurotiomycetes</taxon>
        <taxon>Eurotiomycetidae</taxon>
        <taxon>Onygenales</taxon>
        <taxon>Ajellomycetaceae</taxon>
        <taxon>Histoplasma</taxon>
    </lineage>
</organism>
<gene>
    <name type="primary">RTC5</name>
    <name type="ORF">HCDG_00740</name>
</gene>
<dbReference type="EMBL" id="GG692419">
    <property type="protein sequence ID" value="EER45161.1"/>
    <property type="molecule type" value="Genomic_DNA"/>
</dbReference>
<dbReference type="SMR" id="C6H208"/>
<dbReference type="STRING" id="544712.C6H208"/>
<dbReference type="VEuPathDB" id="FungiDB:HCDG_00740"/>
<dbReference type="eggNOG" id="ENOG502QV3R">
    <property type="taxonomic scope" value="Eukaryota"/>
</dbReference>
<dbReference type="HOGENOM" id="CLU_011918_1_0_1"/>
<dbReference type="OMA" id="KWEFEAR"/>
<dbReference type="OrthoDB" id="10437at299071"/>
<dbReference type="Proteomes" id="UP000002624">
    <property type="component" value="Unassembled WGS sequence"/>
</dbReference>
<dbReference type="GO" id="GO:0005737">
    <property type="term" value="C:cytoplasm"/>
    <property type="evidence" value="ECO:0007669"/>
    <property type="project" value="UniProtKB-SubCell"/>
</dbReference>
<dbReference type="InterPro" id="IPR006571">
    <property type="entry name" value="TLDc_dom"/>
</dbReference>
<dbReference type="Pfam" id="PF07534">
    <property type="entry name" value="TLD"/>
    <property type="match status" value="1"/>
</dbReference>
<dbReference type="SMART" id="SM00584">
    <property type="entry name" value="TLDc"/>
    <property type="match status" value="1"/>
</dbReference>
<dbReference type="PROSITE" id="PS51886">
    <property type="entry name" value="TLDC"/>
    <property type="match status" value="1"/>
</dbReference>